<evidence type="ECO:0000255" key="1">
    <source>
        <dbReference type="HAMAP-Rule" id="MF_00168"/>
    </source>
</evidence>
<keyword id="KW-0328">Glycosyltransferase</keyword>
<keyword id="KW-0479">Metal-binding</keyword>
<keyword id="KW-0671">Queuosine biosynthesis</keyword>
<keyword id="KW-0808">Transferase</keyword>
<keyword id="KW-0819">tRNA processing</keyword>
<keyword id="KW-0862">Zinc</keyword>
<name>TGT_SALA4</name>
<reference key="1">
    <citation type="journal article" date="2011" name="J. Bacteriol.">
        <title>Comparative genomics of 28 Salmonella enterica isolates: evidence for CRISPR-mediated adaptive sublineage evolution.</title>
        <authorList>
            <person name="Fricke W.F."/>
            <person name="Mammel M.K."/>
            <person name="McDermott P.F."/>
            <person name="Tartera C."/>
            <person name="White D.G."/>
            <person name="Leclerc J.E."/>
            <person name="Ravel J."/>
            <person name="Cebula T.A."/>
        </authorList>
    </citation>
    <scope>NUCLEOTIDE SEQUENCE [LARGE SCALE GENOMIC DNA]</scope>
    <source>
        <strain>SL483</strain>
    </source>
</reference>
<protein>
    <recommendedName>
        <fullName evidence="1">Queuine tRNA-ribosyltransferase</fullName>
        <ecNumber evidence="1">2.4.2.29</ecNumber>
    </recommendedName>
    <alternativeName>
        <fullName evidence="1">Guanine insertion enzyme</fullName>
    </alternativeName>
    <alternativeName>
        <fullName evidence="1">tRNA-guanine transglycosylase</fullName>
    </alternativeName>
</protein>
<comment type="function">
    <text evidence="1">Catalyzes the base-exchange of a guanine (G) residue with the queuine precursor 7-aminomethyl-7-deazaguanine (PreQ1) at position 34 (anticodon wobble position) in tRNAs with GU(N) anticodons (tRNA-Asp, -Asn, -His and -Tyr). Catalysis occurs through a double-displacement mechanism. The nucleophile active site attacks the C1' of nucleotide 34 to detach the guanine base from the RNA, forming a covalent enzyme-RNA intermediate. The proton acceptor active site deprotonates the incoming PreQ1, allowing a nucleophilic attack on the C1' of the ribose to form the product. After dissociation, two additional enzymatic reactions on the tRNA convert PreQ1 to queuine (Q), resulting in the hypermodified nucleoside queuosine (7-(((4,5-cis-dihydroxy-2-cyclopenten-1-yl)amino)methyl)-7-deazaguanosine).</text>
</comment>
<comment type="catalytic activity">
    <reaction evidence="1">
        <text>7-aminomethyl-7-carbaguanine + guanosine(34) in tRNA = 7-aminomethyl-7-carbaguanosine(34) in tRNA + guanine</text>
        <dbReference type="Rhea" id="RHEA:24104"/>
        <dbReference type="Rhea" id="RHEA-COMP:10341"/>
        <dbReference type="Rhea" id="RHEA-COMP:10342"/>
        <dbReference type="ChEBI" id="CHEBI:16235"/>
        <dbReference type="ChEBI" id="CHEBI:58703"/>
        <dbReference type="ChEBI" id="CHEBI:74269"/>
        <dbReference type="ChEBI" id="CHEBI:82833"/>
        <dbReference type="EC" id="2.4.2.29"/>
    </reaction>
</comment>
<comment type="cofactor">
    <cofactor evidence="1">
        <name>Zn(2+)</name>
        <dbReference type="ChEBI" id="CHEBI:29105"/>
    </cofactor>
    <text evidence="1">Binds 1 zinc ion per subunit.</text>
</comment>
<comment type="pathway">
    <text evidence="1">tRNA modification; tRNA-queuosine biosynthesis.</text>
</comment>
<comment type="subunit">
    <text evidence="1">Homodimer. Within each dimer, one monomer is responsible for RNA recognition and catalysis, while the other monomer binds to the replacement base PreQ1.</text>
</comment>
<comment type="similarity">
    <text evidence="1">Belongs to the queuine tRNA-ribosyltransferase family.</text>
</comment>
<proteinExistence type="inferred from homology"/>
<organism>
    <name type="scientific">Salmonella agona (strain SL483)</name>
    <dbReference type="NCBI Taxonomy" id="454166"/>
    <lineage>
        <taxon>Bacteria</taxon>
        <taxon>Pseudomonadati</taxon>
        <taxon>Pseudomonadota</taxon>
        <taxon>Gammaproteobacteria</taxon>
        <taxon>Enterobacterales</taxon>
        <taxon>Enterobacteriaceae</taxon>
        <taxon>Salmonella</taxon>
    </lineage>
</organism>
<sequence>MKFELDTTDGRARRGRLVFDRGVVETPAFMPVGTYGTVKGMTPEEVEATGAQIILGNTFHLWLRPGQEIMKLHGDLHDFMQWKGPILTDSGGFQVFSLGDIRKITEQGVHFRNPINGDPIFLDPEKSMEIQYDLGSDIVMIFDECTPYPADWDYAKRSMEMSLRWAKRSRDRFDSLGNKNALFGIIQGSVYEDLRDISVKGLVEIGFDGYAVGGLAVGEPKADMHRILEHVCPQIPADKPRYLMGVGKPEDLVEGVRRGIDMFDCVMPTRNARNGHLFVTDGVVKIRNAKHKSDTSPLDAECDCYTCRNYSRAYLHHLDRCNEILGARLNTIHNLRYYQRLMAGLRKAIEEGKLESFVTEFYQRQGRPVPPLNVD</sequence>
<feature type="chain" id="PRO_1000097557" description="Queuine tRNA-ribosyltransferase">
    <location>
        <begin position="1"/>
        <end position="375"/>
    </location>
</feature>
<feature type="region of interest" description="RNA binding" evidence="1">
    <location>
        <begin position="245"/>
        <end position="251"/>
    </location>
</feature>
<feature type="region of interest" description="RNA binding; important for wobble base 34 recognition" evidence="1">
    <location>
        <begin position="269"/>
        <end position="273"/>
    </location>
</feature>
<feature type="active site" description="Proton acceptor" evidence="1">
    <location>
        <position position="89"/>
    </location>
</feature>
<feature type="active site" description="Nucleophile" evidence="1">
    <location>
        <position position="264"/>
    </location>
</feature>
<feature type="binding site" evidence="1">
    <location>
        <begin position="89"/>
        <end position="93"/>
    </location>
    <ligand>
        <name>substrate</name>
    </ligand>
</feature>
<feature type="binding site" evidence="1">
    <location>
        <position position="143"/>
    </location>
    <ligand>
        <name>substrate</name>
    </ligand>
</feature>
<feature type="binding site" evidence="1">
    <location>
        <position position="187"/>
    </location>
    <ligand>
        <name>substrate</name>
    </ligand>
</feature>
<feature type="binding site" evidence="1">
    <location>
        <position position="214"/>
    </location>
    <ligand>
        <name>substrate</name>
    </ligand>
</feature>
<feature type="binding site" evidence="1">
    <location>
        <position position="302"/>
    </location>
    <ligand>
        <name>Zn(2+)</name>
        <dbReference type="ChEBI" id="CHEBI:29105"/>
    </ligand>
</feature>
<feature type="binding site" evidence="1">
    <location>
        <position position="304"/>
    </location>
    <ligand>
        <name>Zn(2+)</name>
        <dbReference type="ChEBI" id="CHEBI:29105"/>
    </ligand>
</feature>
<feature type="binding site" evidence="1">
    <location>
        <position position="307"/>
    </location>
    <ligand>
        <name>Zn(2+)</name>
        <dbReference type="ChEBI" id="CHEBI:29105"/>
    </ligand>
</feature>
<feature type="binding site" evidence="1">
    <location>
        <position position="333"/>
    </location>
    <ligand>
        <name>Zn(2+)</name>
        <dbReference type="ChEBI" id="CHEBI:29105"/>
    </ligand>
</feature>
<accession>B5EWT9</accession>
<gene>
    <name evidence="1" type="primary">tgt</name>
    <name type="ordered locus">SeAg_B0444</name>
</gene>
<dbReference type="EC" id="2.4.2.29" evidence="1"/>
<dbReference type="EMBL" id="CP001138">
    <property type="protein sequence ID" value="ACH49943.1"/>
    <property type="molecule type" value="Genomic_DNA"/>
</dbReference>
<dbReference type="RefSeq" id="WP_000667305.1">
    <property type="nucleotide sequence ID" value="NC_011149.1"/>
</dbReference>
<dbReference type="SMR" id="B5EWT9"/>
<dbReference type="KEGG" id="sea:SeAg_B0444"/>
<dbReference type="HOGENOM" id="CLU_022060_0_1_6"/>
<dbReference type="UniPathway" id="UPA00392"/>
<dbReference type="Proteomes" id="UP000008819">
    <property type="component" value="Chromosome"/>
</dbReference>
<dbReference type="GO" id="GO:0005829">
    <property type="term" value="C:cytosol"/>
    <property type="evidence" value="ECO:0007669"/>
    <property type="project" value="TreeGrafter"/>
</dbReference>
<dbReference type="GO" id="GO:0046872">
    <property type="term" value="F:metal ion binding"/>
    <property type="evidence" value="ECO:0007669"/>
    <property type="project" value="UniProtKB-KW"/>
</dbReference>
<dbReference type="GO" id="GO:0008479">
    <property type="term" value="F:tRNA-guanosine(34) queuine transglycosylase activity"/>
    <property type="evidence" value="ECO:0007669"/>
    <property type="project" value="UniProtKB-UniRule"/>
</dbReference>
<dbReference type="GO" id="GO:0008616">
    <property type="term" value="P:queuosine biosynthetic process"/>
    <property type="evidence" value="ECO:0007669"/>
    <property type="project" value="UniProtKB-UniRule"/>
</dbReference>
<dbReference type="GO" id="GO:0002099">
    <property type="term" value="P:tRNA wobble guanine modification"/>
    <property type="evidence" value="ECO:0007669"/>
    <property type="project" value="TreeGrafter"/>
</dbReference>
<dbReference type="GO" id="GO:0101030">
    <property type="term" value="P:tRNA-guanine transglycosylation"/>
    <property type="evidence" value="ECO:0007669"/>
    <property type="project" value="InterPro"/>
</dbReference>
<dbReference type="FunFam" id="3.20.20.105:FF:000001">
    <property type="entry name" value="Queuine tRNA-ribosyltransferase"/>
    <property type="match status" value="1"/>
</dbReference>
<dbReference type="Gene3D" id="3.20.20.105">
    <property type="entry name" value="Queuine tRNA-ribosyltransferase-like"/>
    <property type="match status" value="1"/>
</dbReference>
<dbReference type="HAMAP" id="MF_00168">
    <property type="entry name" value="Q_tRNA_Tgt"/>
    <property type="match status" value="1"/>
</dbReference>
<dbReference type="InterPro" id="IPR050076">
    <property type="entry name" value="ArchSynthase1/Queuine_TRR"/>
</dbReference>
<dbReference type="InterPro" id="IPR004803">
    <property type="entry name" value="TGT"/>
</dbReference>
<dbReference type="InterPro" id="IPR036511">
    <property type="entry name" value="TGT-like_sf"/>
</dbReference>
<dbReference type="InterPro" id="IPR002616">
    <property type="entry name" value="tRNA_ribo_trans-like"/>
</dbReference>
<dbReference type="NCBIfam" id="TIGR00430">
    <property type="entry name" value="Q_tRNA_tgt"/>
    <property type="match status" value="1"/>
</dbReference>
<dbReference type="NCBIfam" id="TIGR00449">
    <property type="entry name" value="tgt_general"/>
    <property type="match status" value="1"/>
</dbReference>
<dbReference type="PANTHER" id="PTHR46499">
    <property type="entry name" value="QUEUINE TRNA-RIBOSYLTRANSFERASE"/>
    <property type="match status" value="1"/>
</dbReference>
<dbReference type="PANTHER" id="PTHR46499:SF1">
    <property type="entry name" value="QUEUINE TRNA-RIBOSYLTRANSFERASE"/>
    <property type="match status" value="1"/>
</dbReference>
<dbReference type="Pfam" id="PF01702">
    <property type="entry name" value="TGT"/>
    <property type="match status" value="1"/>
</dbReference>
<dbReference type="SUPFAM" id="SSF51713">
    <property type="entry name" value="tRNA-guanine transglycosylase"/>
    <property type="match status" value="1"/>
</dbReference>